<sequence length="626" mass="69752">MMTASVAGNRSGRSGNIARERSNRSRGAQKSDKERNLSKGSSRPKSNSSRVKKMRKSSLSKVQKNFAVFNDSAEHENKYETLAVAEADEKEVILLDEEEDTAMTTETKGVHAEETANVTGAEGVNAAANALDDNQDFIGFSDSEEEVASGEENGDADYAVEDAEDESSEPLPTNADYPWIQNHDHSRQREIADWLTLEIKDFVSYISPNKTEIQLRNDALKRIRDAVQDFWPDANLHCFGSYATDLYLPGSDIDCVVNSKSGDKDNKNALYSLASYLKRNGLATQVSVIAKARVPIIKFVEPASQIHIDLSFERTNGVEAAKIIRGWLHDTPGLRELVLIVKQFLHARRLNDVHIGGLGGFSIICLAYSFLKLHPRIICRDIEPLQNLGVLLIDFFELYGKNFGYDDVGIAVSEGDASYINKKEYPELTRNLRGTFNLVIQDPGDPANNISRGSFNIRDIKKAFAGAFELLTNRCFELDAATFKHRVGKSILGNVIKYRGAKRDFKDERALIVNKAIQENEEFHQRRGRIVHRDTAEFINISDDDDYELQPPPKRARVPAPAPAPADNVVVLDDPADDYVPAQPVDKLMGLDDTDDYLPAPASPTDTPKLDKAAKRNYWLSKGQTM</sequence>
<reference key="1">
    <citation type="journal article" date="2000" name="J. Cell Sci.">
        <title>A PAK-like protein kinase is required for maturation of young hyphae and septation in the filamentous ascomycete Ashbya gossypii.</title>
        <authorList>
            <person name="Ayad-Durieux Y."/>
            <person name="Knechtle P."/>
            <person name="Goff S."/>
            <person name="Dietrich F.S."/>
            <person name="Philippsen P."/>
        </authorList>
    </citation>
    <scope>NUCLEOTIDE SEQUENCE [GENOMIC DNA]</scope>
</reference>
<reference key="2">
    <citation type="journal article" date="2004" name="Science">
        <title>The Ashbya gossypii genome as a tool for mapping the ancient Saccharomyces cerevisiae genome.</title>
        <authorList>
            <person name="Dietrich F.S."/>
            <person name="Voegeli S."/>
            <person name="Brachat S."/>
            <person name="Lerch A."/>
            <person name="Gates K."/>
            <person name="Steiner S."/>
            <person name="Mohr C."/>
            <person name="Poehlmann R."/>
            <person name="Luedi P."/>
            <person name="Choi S."/>
            <person name="Wing R.A."/>
            <person name="Flavier A."/>
            <person name="Gaffney T.D."/>
            <person name="Philippsen P."/>
        </authorList>
    </citation>
    <scope>NUCLEOTIDE SEQUENCE [LARGE SCALE GENOMIC DNA]</scope>
    <source>
        <strain>ATCC 10895 / CBS 109.51 / FGSC 9923 / NRRL Y-1056</strain>
    </source>
</reference>
<reference key="3">
    <citation type="journal article" date="2013" name="G3 (Bethesda)">
        <title>Genomes of Ashbya fungi isolated from insects reveal four mating-type loci, numerous translocations, lack of transposons, and distinct gene duplications.</title>
        <authorList>
            <person name="Dietrich F.S."/>
            <person name="Voegeli S."/>
            <person name="Kuo S."/>
            <person name="Philippsen P."/>
        </authorList>
    </citation>
    <scope>GENOME REANNOTATION</scope>
    <source>
        <strain>ATCC 10895 / CBS 109.51 / FGSC 9923 / NRRL Y-1056</strain>
    </source>
</reference>
<organism>
    <name type="scientific">Eremothecium gossypii (strain ATCC 10895 / CBS 109.51 / FGSC 9923 / NRRL Y-1056)</name>
    <name type="common">Yeast</name>
    <name type="synonym">Ashbya gossypii</name>
    <dbReference type="NCBI Taxonomy" id="284811"/>
    <lineage>
        <taxon>Eukaryota</taxon>
        <taxon>Fungi</taxon>
        <taxon>Dikarya</taxon>
        <taxon>Ascomycota</taxon>
        <taxon>Saccharomycotina</taxon>
        <taxon>Saccharomycetes</taxon>
        <taxon>Saccharomycetales</taxon>
        <taxon>Saccharomycetaceae</taxon>
        <taxon>Eremothecium</taxon>
    </lineage>
</organism>
<proteinExistence type="inferred from homology"/>
<gene>
    <name type="primary">TRF5</name>
    <name type="ordered locus">AEL207W</name>
</gene>
<dbReference type="EC" id="2.7.7.19" evidence="3"/>
<dbReference type="EMBL" id="AF286114">
    <property type="protein sequence ID" value="AAG17722.1"/>
    <property type="molecule type" value="Genomic_DNA"/>
</dbReference>
<dbReference type="EMBL" id="AE016818">
    <property type="protein sequence ID" value="AAS52478.1"/>
    <property type="molecule type" value="Genomic_DNA"/>
</dbReference>
<dbReference type="RefSeq" id="NP_984654.1">
    <property type="nucleotide sequence ID" value="NM_210007.1"/>
</dbReference>
<dbReference type="SMR" id="Q9HFW3"/>
<dbReference type="FunCoup" id="Q9HFW3">
    <property type="interactions" value="442"/>
</dbReference>
<dbReference type="STRING" id="284811.Q9HFW3"/>
<dbReference type="EnsemblFungi" id="AAS52478">
    <property type="protein sequence ID" value="AAS52478"/>
    <property type="gene ID" value="AGOS_AEL207W"/>
</dbReference>
<dbReference type="GeneID" id="4620836"/>
<dbReference type="KEGG" id="ago:AGOS_AEL207W"/>
<dbReference type="eggNOG" id="KOG1906">
    <property type="taxonomic scope" value="Eukaryota"/>
</dbReference>
<dbReference type="HOGENOM" id="CLU_013572_5_0_1"/>
<dbReference type="InParanoid" id="Q9HFW3"/>
<dbReference type="OMA" id="IIKQFLH"/>
<dbReference type="OrthoDB" id="273917at2759"/>
<dbReference type="Proteomes" id="UP000000591">
    <property type="component" value="Chromosome V"/>
</dbReference>
<dbReference type="GO" id="GO:0005730">
    <property type="term" value="C:nucleolus"/>
    <property type="evidence" value="ECO:0000318"/>
    <property type="project" value="GO_Central"/>
</dbReference>
<dbReference type="GO" id="GO:0031499">
    <property type="term" value="C:TRAMP complex"/>
    <property type="evidence" value="ECO:0000318"/>
    <property type="project" value="GO_Central"/>
</dbReference>
<dbReference type="GO" id="GO:0005524">
    <property type="term" value="F:ATP binding"/>
    <property type="evidence" value="ECO:0007669"/>
    <property type="project" value="UniProtKB-KW"/>
</dbReference>
<dbReference type="GO" id="GO:0046872">
    <property type="term" value="F:metal ion binding"/>
    <property type="evidence" value="ECO:0007669"/>
    <property type="project" value="UniProtKB-KW"/>
</dbReference>
<dbReference type="GO" id="GO:1990817">
    <property type="term" value="F:poly(A) RNA polymerase activity"/>
    <property type="evidence" value="ECO:0000318"/>
    <property type="project" value="GO_Central"/>
</dbReference>
<dbReference type="GO" id="GO:0051301">
    <property type="term" value="P:cell division"/>
    <property type="evidence" value="ECO:0007669"/>
    <property type="project" value="UniProtKB-KW"/>
</dbReference>
<dbReference type="GO" id="GO:0043634">
    <property type="term" value="P:polyadenylation-dependent ncRNA catabolic process"/>
    <property type="evidence" value="ECO:0000318"/>
    <property type="project" value="GO_Central"/>
</dbReference>
<dbReference type="GO" id="GO:0031123">
    <property type="term" value="P:RNA 3'-end processing"/>
    <property type="evidence" value="ECO:0000318"/>
    <property type="project" value="GO_Central"/>
</dbReference>
<dbReference type="CDD" id="cd05402">
    <property type="entry name" value="NT_PAP_TUTase"/>
    <property type="match status" value="1"/>
</dbReference>
<dbReference type="FunFam" id="3.30.460.10:FF:000006">
    <property type="entry name" value="non-canonical poly(A) RNA polymerase PAPD5"/>
    <property type="match status" value="1"/>
</dbReference>
<dbReference type="FunFam" id="1.10.1410.10:FF:000003">
    <property type="entry name" value="non-canonical poly(A) RNA polymerase PAPD7"/>
    <property type="match status" value="1"/>
</dbReference>
<dbReference type="Gene3D" id="1.10.1410.10">
    <property type="match status" value="1"/>
</dbReference>
<dbReference type="Gene3D" id="3.30.460.10">
    <property type="entry name" value="Beta Polymerase, domain 2"/>
    <property type="match status" value="1"/>
</dbReference>
<dbReference type="InterPro" id="IPR054708">
    <property type="entry name" value="MTPAP-like_central"/>
</dbReference>
<dbReference type="InterPro" id="IPR043519">
    <property type="entry name" value="NT_sf"/>
</dbReference>
<dbReference type="InterPro" id="IPR002058">
    <property type="entry name" value="PAP_assoc"/>
</dbReference>
<dbReference type="InterPro" id="IPR045862">
    <property type="entry name" value="Trf4-like"/>
</dbReference>
<dbReference type="PANTHER" id="PTHR23092:SF15">
    <property type="entry name" value="INACTIVE NON-CANONICAL POLY(A) RNA POLYMERASE PROTEIN TRF4-2-RELATED"/>
    <property type="match status" value="1"/>
</dbReference>
<dbReference type="PANTHER" id="PTHR23092">
    <property type="entry name" value="POLY(A) RNA POLYMERASE"/>
    <property type="match status" value="1"/>
</dbReference>
<dbReference type="Pfam" id="PF22600">
    <property type="entry name" value="MTPAP-like_central"/>
    <property type="match status" value="1"/>
</dbReference>
<dbReference type="Pfam" id="PF03828">
    <property type="entry name" value="PAP_assoc"/>
    <property type="match status" value="1"/>
</dbReference>
<dbReference type="SUPFAM" id="SSF81301">
    <property type="entry name" value="Nucleotidyltransferase"/>
    <property type="match status" value="1"/>
</dbReference>
<dbReference type="SUPFAM" id="SSF81631">
    <property type="entry name" value="PAP/OAS1 substrate-binding domain"/>
    <property type="match status" value="1"/>
</dbReference>
<feature type="chain" id="PRO_0000120315" description="Poly(A) RNA polymerase protein 1">
    <location>
        <begin position="1"/>
        <end position="626"/>
    </location>
</feature>
<feature type="domain" description="PAP-associated">
    <location>
        <begin position="387"/>
        <end position="448"/>
    </location>
</feature>
<feature type="region of interest" description="Disordered" evidence="4">
    <location>
        <begin position="1"/>
        <end position="62"/>
    </location>
</feature>
<feature type="region of interest" description="Disordered" evidence="4">
    <location>
        <begin position="590"/>
        <end position="626"/>
    </location>
</feature>
<feature type="compositionally biased region" description="Polar residues" evidence="4">
    <location>
        <begin position="1"/>
        <end position="14"/>
    </location>
</feature>
<feature type="compositionally biased region" description="Basic and acidic residues" evidence="4">
    <location>
        <begin position="18"/>
        <end position="37"/>
    </location>
</feature>
<feature type="compositionally biased region" description="Low complexity" evidence="4">
    <location>
        <begin position="38"/>
        <end position="49"/>
    </location>
</feature>
<feature type="binding site" evidence="1">
    <location>
        <position position="252"/>
    </location>
    <ligand>
        <name>Mg(2+)</name>
        <dbReference type="ChEBI" id="CHEBI:18420"/>
        <note>catalytic</note>
    </ligand>
</feature>
<feature type="binding site" evidence="1">
    <location>
        <position position="254"/>
    </location>
    <ligand>
        <name>Mg(2+)</name>
        <dbReference type="ChEBI" id="CHEBI:18420"/>
        <note>catalytic</note>
    </ligand>
</feature>
<feature type="binding site" evidence="1">
    <location>
        <position position="317"/>
    </location>
    <ligand>
        <name>ATP</name>
        <dbReference type="ChEBI" id="CHEBI:30616"/>
    </ligand>
</feature>
<feature type="binding site" evidence="1">
    <location>
        <position position="342"/>
    </location>
    <ligand>
        <name>ATP</name>
        <dbReference type="ChEBI" id="CHEBI:30616"/>
    </ligand>
</feature>
<feature type="binding site" evidence="1">
    <location>
        <position position="448"/>
    </location>
    <ligand>
        <name>ATP</name>
        <dbReference type="ChEBI" id="CHEBI:30616"/>
    </ligand>
</feature>
<feature type="binding site" evidence="1">
    <location>
        <position position="452"/>
    </location>
    <ligand>
        <name>ATP</name>
        <dbReference type="ChEBI" id="CHEBI:30616"/>
    </ligand>
</feature>
<protein>
    <recommendedName>
        <fullName>Poly(A) RNA polymerase protein 1</fullName>
        <ecNumber evidence="3">2.7.7.19</ecNumber>
    </recommendedName>
    <alternativeName>
        <fullName>Topoisomerase 1-related protein TRF5</fullName>
    </alternativeName>
</protein>
<keyword id="KW-0067">ATP-binding</keyword>
<keyword id="KW-0131">Cell cycle</keyword>
<keyword id="KW-0132">Cell division</keyword>
<keyword id="KW-0460">Magnesium</keyword>
<keyword id="KW-0464">Manganese</keyword>
<keyword id="KW-0479">Metal-binding</keyword>
<keyword id="KW-0498">Mitosis</keyword>
<keyword id="KW-0547">Nucleotide-binding</keyword>
<keyword id="KW-0548">Nucleotidyltransferase</keyword>
<keyword id="KW-0539">Nucleus</keyword>
<keyword id="KW-1185">Reference proteome</keyword>
<keyword id="KW-0808">Transferase</keyword>
<evidence type="ECO:0000250" key="1">
    <source>
        <dbReference type="UniProtKB" id="O13833"/>
    </source>
</evidence>
<evidence type="ECO:0000250" key="2">
    <source>
        <dbReference type="UniProtKB" id="P48561"/>
    </source>
</evidence>
<evidence type="ECO:0000250" key="3">
    <source>
        <dbReference type="UniProtKB" id="P53632"/>
    </source>
</evidence>
<evidence type="ECO:0000256" key="4">
    <source>
        <dbReference type="SAM" id="MobiDB-lite"/>
    </source>
</evidence>
<evidence type="ECO:0000305" key="5"/>
<accession>Q9HFW3</accession>
<comment type="function">
    <text evidence="2">Catalytic subunit of the TRAMP5 complex which has a poly(A) RNA polymerase activity and is involved in a post-transcriptional quality control mechanism limiting inappropriate expression of genetic information. Polyadenylation is required for the degradative activity of the exosome on several of its nuclear RNA substrates like cryptic transcripts generated by RNA polymerase II and III, or hypomethylated pre-tRNAi-Met. Polyadenylates RNA processing and degradation intermediates of snRNAs, snoRNAs and mRNAs that accumulate in strains lacking a functional exosome. TRF5 is also required for proper nuclear division in mitosis and sister chromatid cohesion. Involved in the regulation of histone mRNA levels. May mediate mitotic chromosome condensation (By similarity).</text>
</comment>
<comment type="catalytic activity">
    <reaction evidence="3">
        <text>RNA(n) + ATP = RNA(n)-3'-adenine ribonucleotide + diphosphate</text>
        <dbReference type="Rhea" id="RHEA:11332"/>
        <dbReference type="Rhea" id="RHEA-COMP:14527"/>
        <dbReference type="Rhea" id="RHEA-COMP:17347"/>
        <dbReference type="ChEBI" id="CHEBI:30616"/>
        <dbReference type="ChEBI" id="CHEBI:33019"/>
        <dbReference type="ChEBI" id="CHEBI:140395"/>
        <dbReference type="ChEBI" id="CHEBI:173115"/>
        <dbReference type="EC" id="2.7.7.19"/>
    </reaction>
</comment>
<comment type="cofactor">
    <cofactor evidence="1">
        <name>Mg(2+)</name>
        <dbReference type="ChEBI" id="CHEBI:18420"/>
    </cofactor>
    <cofactor evidence="1">
        <name>Mn(2+)</name>
        <dbReference type="ChEBI" id="CHEBI:29035"/>
    </cofactor>
</comment>
<comment type="subunit">
    <text evidence="2">Component of the TRAMP5 complex.</text>
</comment>
<comment type="subcellular location">
    <subcellularLocation>
        <location evidence="2">Nucleus</location>
        <location evidence="2">Nucleolus</location>
    </subcellularLocation>
</comment>
<comment type="similarity">
    <text evidence="5">Belongs to the DNA polymerase type-B-like family.</text>
</comment>
<name>TRF5_EREGS</name>